<reference key="1">
    <citation type="journal article" date="2006" name="Mol. Microbiol.">
        <title>Role of pathogenicity island-associated integrases in the genome plasticity of uropathogenic Escherichia coli strain 536.</title>
        <authorList>
            <person name="Hochhut B."/>
            <person name="Wilde C."/>
            <person name="Balling G."/>
            <person name="Middendorf B."/>
            <person name="Dobrindt U."/>
            <person name="Brzuszkiewicz E."/>
            <person name="Gottschalk G."/>
            <person name="Carniel E."/>
            <person name="Hacker J."/>
        </authorList>
    </citation>
    <scope>NUCLEOTIDE SEQUENCE [LARGE SCALE GENOMIC DNA]</scope>
    <source>
        <strain>536 / UPEC</strain>
    </source>
</reference>
<proteinExistence type="inferred from homology"/>
<comment type="function">
    <text evidence="1">One of the primary rRNA binding proteins. Required for association of the 30S and 50S subunits to form the 70S ribosome, for tRNA binding and peptide bond formation. It has been suggested to have peptidyltransferase activity; this is somewhat controversial. Makes several contacts with the 16S rRNA in the 70S ribosome.</text>
</comment>
<comment type="subunit">
    <text evidence="1">Part of the 50S ribosomal subunit. Forms a bridge to the 30S subunit in the 70S ribosome.</text>
</comment>
<comment type="similarity">
    <text evidence="1">Belongs to the universal ribosomal protein uL2 family.</text>
</comment>
<evidence type="ECO:0000255" key="1">
    <source>
        <dbReference type="HAMAP-Rule" id="MF_01320"/>
    </source>
</evidence>
<evidence type="ECO:0000256" key="2">
    <source>
        <dbReference type="SAM" id="MobiDB-lite"/>
    </source>
</evidence>
<evidence type="ECO:0000305" key="3"/>
<feature type="chain" id="PRO_0000309915" description="Large ribosomal subunit protein uL2">
    <location>
        <begin position="1"/>
        <end position="273"/>
    </location>
</feature>
<feature type="region of interest" description="Disordered" evidence="2">
    <location>
        <begin position="28"/>
        <end position="53"/>
    </location>
</feature>
<feature type="region of interest" description="Disordered" evidence="2">
    <location>
        <begin position="221"/>
        <end position="273"/>
    </location>
</feature>
<feature type="compositionally biased region" description="Low complexity" evidence="2">
    <location>
        <begin position="39"/>
        <end position="48"/>
    </location>
</feature>
<feature type="modified residue" description="N6-acetyllysine" evidence="1">
    <location>
        <position position="242"/>
    </location>
</feature>
<name>RL2_ECOL5</name>
<organism>
    <name type="scientific">Escherichia coli O6:K15:H31 (strain 536 / UPEC)</name>
    <dbReference type="NCBI Taxonomy" id="362663"/>
    <lineage>
        <taxon>Bacteria</taxon>
        <taxon>Pseudomonadati</taxon>
        <taxon>Pseudomonadota</taxon>
        <taxon>Gammaproteobacteria</taxon>
        <taxon>Enterobacterales</taxon>
        <taxon>Enterobacteriaceae</taxon>
        <taxon>Escherichia</taxon>
    </lineage>
</organism>
<dbReference type="EMBL" id="CP000247">
    <property type="protein sequence ID" value="ABG71385.1"/>
    <property type="molecule type" value="Genomic_DNA"/>
</dbReference>
<dbReference type="RefSeq" id="WP_000301864.1">
    <property type="nucleotide sequence ID" value="NC_008253.1"/>
</dbReference>
<dbReference type="SMR" id="Q0TCE4"/>
<dbReference type="GeneID" id="93778670"/>
<dbReference type="KEGG" id="ecp:ECP_3405"/>
<dbReference type="HOGENOM" id="CLU_036235_2_1_6"/>
<dbReference type="Proteomes" id="UP000009182">
    <property type="component" value="Chromosome"/>
</dbReference>
<dbReference type="GO" id="GO:0005829">
    <property type="term" value="C:cytosol"/>
    <property type="evidence" value="ECO:0007669"/>
    <property type="project" value="UniProtKB-ARBA"/>
</dbReference>
<dbReference type="GO" id="GO:0015934">
    <property type="term" value="C:large ribosomal subunit"/>
    <property type="evidence" value="ECO:0007669"/>
    <property type="project" value="InterPro"/>
</dbReference>
<dbReference type="GO" id="GO:0019843">
    <property type="term" value="F:rRNA binding"/>
    <property type="evidence" value="ECO:0007669"/>
    <property type="project" value="UniProtKB-UniRule"/>
</dbReference>
<dbReference type="GO" id="GO:0003735">
    <property type="term" value="F:structural constituent of ribosome"/>
    <property type="evidence" value="ECO:0007669"/>
    <property type="project" value="InterPro"/>
</dbReference>
<dbReference type="GO" id="GO:0016740">
    <property type="term" value="F:transferase activity"/>
    <property type="evidence" value="ECO:0007669"/>
    <property type="project" value="InterPro"/>
</dbReference>
<dbReference type="GO" id="GO:0002181">
    <property type="term" value="P:cytoplasmic translation"/>
    <property type="evidence" value="ECO:0007669"/>
    <property type="project" value="TreeGrafter"/>
</dbReference>
<dbReference type="FunFam" id="2.30.30.30:FF:000001">
    <property type="entry name" value="50S ribosomal protein L2"/>
    <property type="match status" value="1"/>
</dbReference>
<dbReference type="FunFam" id="2.40.50.140:FF:000003">
    <property type="entry name" value="50S ribosomal protein L2"/>
    <property type="match status" value="1"/>
</dbReference>
<dbReference type="FunFam" id="4.10.950.10:FF:000001">
    <property type="entry name" value="50S ribosomal protein L2"/>
    <property type="match status" value="1"/>
</dbReference>
<dbReference type="Gene3D" id="2.30.30.30">
    <property type="match status" value="1"/>
</dbReference>
<dbReference type="Gene3D" id="2.40.50.140">
    <property type="entry name" value="Nucleic acid-binding proteins"/>
    <property type="match status" value="1"/>
</dbReference>
<dbReference type="Gene3D" id="4.10.950.10">
    <property type="entry name" value="Ribosomal protein L2, domain 3"/>
    <property type="match status" value="1"/>
</dbReference>
<dbReference type="HAMAP" id="MF_01320_B">
    <property type="entry name" value="Ribosomal_uL2_B"/>
    <property type="match status" value="1"/>
</dbReference>
<dbReference type="InterPro" id="IPR012340">
    <property type="entry name" value="NA-bd_OB-fold"/>
</dbReference>
<dbReference type="InterPro" id="IPR014722">
    <property type="entry name" value="Rib_uL2_dom2"/>
</dbReference>
<dbReference type="InterPro" id="IPR002171">
    <property type="entry name" value="Ribosomal_uL2"/>
</dbReference>
<dbReference type="InterPro" id="IPR005880">
    <property type="entry name" value="Ribosomal_uL2_bac/org-type"/>
</dbReference>
<dbReference type="InterPro" id="IPR022669">
    <property type="entry name" value="Ribosomal_uL2_C"/>
</dbReference>
<dbReference type="InterPro" id="IPR022671">
    <property type="entry name" value="Ribosomal_uL2_CS"/>
</dbReference>
<dbReference type="InterPro" id="IPR014726">
    <property type="entry name" value="Ribosomal_uL2_dom3"/>
</dbReference>
<dbReference type="InterPro" id="IPR022666">
    <property type="entry name" value="Ribosomal_uL2_RNA-bd_dom"/>
</dbReference>
<dbReference type="InterPro" id="IPR008991">
    <property type="entry name" value="Translation_prot_SH3-like_sf"/>
</dbReference>
<dbReference type="NCBIfam" id="TIGR01171">
    <property type="entry name" value="rplB_bact"/>
    <property type="match status" value="1"/>
</dbReference>
<dbReference type="PANTHER" id="PTHR13691:SF5">
    <property type="entry name" value="LARGE RIBOSOMAL SUBUNIT PROTEIN UL2M"/>
    <property type="match status" value="1"/>
</dbReference>
<dbReference type="PANTHER" id="PTHR13691">
    <property type="entry name" value="RIBOSOMAL PROTEIN L2"/>
    <property type="match status" value="1"/>
</dbReference>
<dbReference type="Pfam" id="PF00181">
    <property type="entry name" value="Ribosomal_L2"/>
    <property type="match status" value="1"/>
</dbReference>
<dbReference type="Pfam" id="PF03947">
    <property type="entry name" value="Ribosomal_L2_C"/>
    <property type="match status" value="1"/>
</dbReference>
<dbReference type="PIRSF" id="PIRSF002158">
    <property type="entry name" value="Ribosomal_L2"/>
    <property type="match status" value="1"/>
</dbReference>
<dbReference type="SMART" id="SM01383">
    <property type="entry name" value="Ribosomal_L2"/>
    <property type="match status" value="1"/>
</dbReference>
<dbReference type="SMART" id="SM01382">
    <property type="entry name" value="Ribosomal_L2_C"/>
    <property type="match status" value="1"/>
</dbReference>
<dbReference type="SUPFAM" id="SSF50249">
    <property type="entry name" value="Nucleic acid-binding proteins"/>
    <property type="match status" value="1"/>
</dbReference>
<dbReference type="SUPFAM" id="SSF50104">
    <property type="entry name" value="Translation proteins SH3-like domain"/>
    <property type="match status" value="1"/>
</dbReference>
<dbReference type="PROSITE" id="PS00467">
    <property type="entry name" value="RIBOSOMAL_L2"/>
    <property type="match status" value="1"/>
</dbReference>
<keyword id="KW-0007">Acetylation</keyword>
<keyword id="KW-0687">Ribonucleoprotein</keyword>
<keyword id="KW-0689">Ribosomal protein</keyword>
<keyword id="KW-0694">RNA-binding</keyword>
<keyword id="KW-0699">rRNA-binding</keyword>
<accession>Q0TCE4</accession>
<gene>
    <name evidence="1" type="primary">rplB</name>
    <name type="ordered locus">ECP_3405</name>
</gene>
<protein>
    <recommendedName>
        <fullName evidence="1">Large ribosomal subunit protein uL2</fullName>
    </recommendedName>
    <alternativeName>
        <fullName evidence="3">50S ribosomal protein L2</fullName>
    </alternativeName>
</protein>
<sequence>MAVVKCKPTSPGRRHVVKVVNPELHKGKPFAPLLEKNSKSGGRNNNGRITTRHIGGGHKQAYRIVDFKRNKDGIPAVVERLEYDPNRSANIALVLYKDGERRYILAPKGLKAGDQIQSGVDAAIKPGNTLPMRNIPVGSTVHNVEMKPGKGGQLARSAGTYVQIVARDGAYVTLRLRSGEMRKVEADCRATLGEVGNAEHMLRVLGKAGAARWRGVRPTVRGTAMNPVDHPHGGGEGRNFGKHPVTPWGVQTKGKKTRSNKRTDKFIVRRRSK</sequence>